<reference key="1">
    <citation type="journal article" date="2002" name="J. Bacteriol.">
        <title>Genome sequence of Yersinia pestis KIM.</title>
        <authorList>
            <person name="Deng W."/>
            <person name="Burland V."/>
            <person name="Plunkett G. III"/>
            <person name="Boutin A."/>
            <person name="Mayhew G.F."/>
            <person name="Liss P."/>
            <person name="Perna N.T."/>
            <person name="Rose D.J."/>
            <person name="Mau B."/>
            <person name="Zhou S."/>
            <person name="Schwartz D.C."/>
            <person name="Fetherston J.D."/>
            <person name="Lindler L.E."/>
            <person name="Brubaker R.R."/>
            <person name="Plano G.V."/>
            <person name="Straley S.C."/>
            <person name="McDonough K.A."/>
            <person name="Nilles M.L."/>
            <person name="Matson J.S."/>
            <person name="Blattner F.R."/>
            <person name="Perry R.D."/>
        </authorList>
    </citation>
    <scope>NUCLEOTIDE SEQUENCE [LARGE SCALE GENOMIC DNA]</scope>
    <source>
        <strain>KIM10+ / Biovar Mediaevalis</strain>
    </source>
</reference>
<reference key="2">
    <citation type="journal article" date="2001" name="Nature">
        <title>Genome sequence of Yersinia pestis, the causative agent of plague.</title>
        <authorList>
            <person name="Parkhill J."/>
            <person name="Wren B.W."/>
            <person name="Thomson N.R."/>
            <person name="Titball R.W."/>
            <person name="Holden M.T.G."/>
            <person name="Prentice M.B."/>
            <person name="Sebaihia M."/>
            <person name="James K.D."/>
            <person name="Churcher C.M."/>
            <person name="Mungall K.L."/>
            <person name="Baker S."/>
            <person name="Basham D."/>
            <person name="Bentley S.D."/>
            <person name="Brooks K."/>
            <person name="Cerdeno-Tarraga A.-M."/>
            <person name="Chillingworth T."/>
            <person name="Cronin A."/>
            <person name="Davies R.M."/>
            <person name="Davis P."/>
            <person name="Dougan G."/>
            <person name="Feltwell T."/>
            <person name="Hamlin N."/>
            <person name="Holroyd S."/>
            <person name="Jagels K."/>
            <person name="Karlyshev A.V."/>
            <person name="Leather S."/>
            <person name="Moule S."/>
            <person name="Oyston P.C.F."/>
            <person name="Quail M.A."/>
            <person name="Rutherford K.M."/>
            <person name="Simmonds M."/>
            <person name="Skelton J."/>
            <person name="Stevens K."/>
            <person name="Whitehead S."/>
            <person name="Barrell B.G."/>
        </authorList>
    </citation>
    <scope>NUCLEOTIDE SEQUENCE [LARGE SCALE GENOMIC DNA]</scope>
    <source>
        <strain>CO-92 / Biovar Orientalis</strain>
    </source>
</reference>
<reference key="3">
    <citation type="journal article" date="2004" name="DNA Res.">
        <title>Complete genome sequence of Yersinia pestis strain 91001, an isolate avirulent to humans.</title>
        <authorList>
            <person name="Song Y."/>
            <person name="Tong Z."/>
            <person name="Wang J."/>
            <person name="Wang L."/>
            <person name="Guo Z."/>
            <person name="Han Y."/>
            <person name="Zhang J."/>
            <person name="Pei D."/>
            <person name="Zhou D."/>
            <person name="Qin H."/>
            <person name="Pang X."/>
            <person name="Han Y."/>
            <person name="Zhai J."/>
            <person name="Li M."/>
            <person name="Cui B."/>
            <person name="Qi Z."/>
            <person name="Jin L."/>
            <person name="Dai R."/>
            <person name="Chen F."/>
            <person name="Li S."/>
            <person name="Ye C."/>
            <person name="Du Z."/>
            <person name="Lin W."/>
            <person name="Wang J."/>
            <person name="Yu J."/>
            <person name="Yang H."/>
            <person name="Wang J."/>
            <person name="Huang P."/>
            <person name="Yang R."/>
        </authorList>
    </citation>
    <scope>NUCLEOTIDE SEQUENCE [LARGE SCALE GENOMIC DNA]</scope>
    <source>
        <strain>91001 / Biovar Mediaevalis</strain>
    </source>
</reference>
<protein>
    <recommendedName>
        <fullName evidence="1">Pyridoxal kinase PdxY</fullName>
        <shortName evidence="1">PL kinase</shortName>
        <ecNumber evidence="1">2.7.1.35</ecNumber>
    </recommendedName>
</protein>
<feature type="chain" id="PRO_0000269838" description="Pyridoxal kinase PdxY">
    <location>
        <begin position="1"/>
        <end position="286"/>
    </location>
</feature>
<feature type="binding site" evidence="1">
    <location>
        <position position="9"/>
    </location>
    <ligand>
        <name>substrate</name>
    </ligand>
</feature>
<feature type="binding site" evidence="1">
    <location>
        <begin position="44"/>
        <end position="45"/>
    </location>
    <ligand>
        <name>substrate</name>
    </ligand>
</feature>
<feature type="binding site" evidence="1">
    <location>
        <position position="111"/>
    </location>
    <ligand>
        <name>ATP</name>
        <dbReference type="ChEBI" id="CHEBI:30616"/>
    </ligand>
</feature>
<feature type="binding site" evidence="1">
    <location>
        <position position="143"/>
    </location>
    <ligand>
        <name>ATP</name>
        <dbReference type="ChEBI" id="CHEBI:30616"/>
    </ligand>
</feature>
<feature type="binding site" evidence="1">
    <location>
        <position position="148"/>
    </location>
    <ligand>
        <name>ATP</name>
        <dbReference type="ChEBI" id="CHEBI:30616"/>
    </ligand>
</feature>
<feature type="binding site" evidence="1">
    <location>
        <position position="181"/>
    </location>
    <ligand>
        <name>ATP</name>
        <dbReference type="ChEBI" id="CHEBI:30616"/>
    </ligand>
</feature>
<feature type="binding site" evidence="1">
    <location>
        <begin position="208"/>
        <end position="211"/>
    </location>
    <ligand>
        <name>ATP</name>
        <dbReference type="ChEBI" id="CHEBI:30616"/>
    </ligand>
</feature>
<feature type="binding site" evidence="1">
    <location>
        <position position="223"/>
    </location>
    <ligand>
        <name>substrate</name>
    </ligand>
</feature>
<feature type="strand" evidence="2">
    <location>
        <begin position="3"/>
        <end position="14"/>
    </location>
</feature>
<feature type="helix" evidence="2">
    <location>
        <begin position="18"/>
        <end position="27"/>
    </location>
</feature>
<feature type="strand" evidence="2">
    <location>
        <begin position="31"/>
        <end position="42"/>
    </location>
</feature>
<feature type="helix" evidence="2">
    <location>
        <begin position="44"/>
        <end position="46"/>
    </location>
</feature>
<feature type="strand" evidence="2">
    <location>
        <begin position="51"/>
        <end position="53"/>
    </location>
</feature>
<feature type="helix" evidence="2">
    <location>
        <begin position="56"/>
        <end position="68"/>
    </location>
</feature>
<feature type="helix" evidence="2">
    <location>
        <begin position="72"/>
        <end position="74"/>
    </location>
</feature>
<feature type="strand" evidence="2">
    <location>
        <begin position="77"/>
        <end position="80"/>
    </location>
</feature>
<feature type="helix" evidence="2">
    <location>
        <begin position="86"/>
        <end position="102"/>
    </location>
</feature>
<feature type="strand" evidence="2">
    <location>
        <begin position="107"/>
        <end position="110"/>
    </location>
</feature>
<feature type="turn" evidence="2">
    <location>
        <begin position="117"/>
        <end position="119"/>
    </location>
</feature>
<feature type="helix" evidence="2">
    <location>
        <begin position="125"/>
        <end position="133"/>
    </location>
</feature>
<feature type="helix" evidence="2">
    <location>
        <begin position="135"/>
        <end position="138"/>
    </location>
</feature>
<feature type="strand" evidence="2">
    <location>
        <begin position="140"/>
        <end position="142"/>
    </location>
</feature>
<feature type="helix" evidence="2">
    <location>
        <begin position="146"/>
        <end position="153"/>
    </location>
</feature>
<feature type="helix" evidence="2">
    <location>
        <begin position="160"/>
        <end position="171"/>
    </location>
</feature>
<feature type="strand" evidence="2">
    <location>
        <begin position="176"/>
        <end position="180"/>
    </location>
</feature>
<feature type="helix" evidence="2">
    <location>
        <begin position="184"/>
        <end position="186"/>
    </location>
</feature>
<feature type="strand" evidence="2">
    <location>
        <begin position="192"/>
        <end position="198"/>
    </location>
</feature>
<feature type="strand" evidence="2">
    <location>
        <begin position="203"/>
        <end position="209"/>
    </location>
</feature>
<feature type="helix" evidence="2">
    <location>
        <begin position="221"/>
        <end position="234"/>
    </location>
</feature>
<feature type="helix" evidence="2">
    <location>
        <begin position="239"/>
        <end position="259"/>
    </location>
</feature>
<feature type="turn" evidence="2">
    <location>
        <begin position="267"/>
        <end position="270"/>
    </location>
</feature>
<feature type="helix" evidence="2">
    <location>
        <begin position="271"/>
        <end position="275"/>
    </location>
</feature>
<organism>
    <name type="scientific">Yersinia pestis</name>
    <dbReference type="NCBI Taxonomy" id="632"/>
    <lineage>
        <taxon>Bacteria</taxon>
        <taxon>Pseudomonadati</taxon>
        <taxon>Pseudomonadota</taxon>
        <taxon>Gammaproteobacteria</taxon>
        <taxon>Enterobacterales</taxon>
        <taxon>Yersiniaceae</taxon>
        <taxon>Yersinia</taxon>
    </lineage>
</organism>
<sequence length="286" mass="31185">MKNILSIQSHVVFGHAGNSAAEFPMRRMGVNVWPLNTVQFSNHTQYGHWTGCVMPASHLTDIVQGIADIDRLKDCDAVLSGYIGSPEQGSHILAAVAQVKQANPDAWYFCDPVMGHPEKGCIVAPGVAEFFCNEALPASDMIAPNLLELEQLSGERVENVEQAVQVARSLCARGPKVVLVKHLSRAGYHADCFEMLLVTADDAWHICRPLVDFGKRQPVGVGDLTSGLLLVNLLKGEPLDKALEHVTAAVYEVMLKTQEMGEYELQVVAAQETIVTPICQFTAVRL</sequence>
<gene>
    <name evidence="1" type="primary">pdxY</name>
    <name type="ordered locus">YPO2368</name>
    <name type="ordered locus">y1967</name>
    <name type="ordered locus">YP_2154</name>
</gene>
<proteinExistence type="evidence at protein level"/>
<accession>Q7CIR8</accession>
<accession>Q74TK1</accession>
<evidence type="ECO:0000255" key="1">
    <source>
        <dbReference type="HAMAP-Rule" id="MF_01639"/>
    </source>
</evidence>
<evidence type="ECO:0007829" key="2">
    <source>
        <dbReference type="PDB" id="3PZS"/>
    </source>
</evidence>
<comment type="function">
    <text evidence="1">Pyridoxal kinase involved in the salvage pathway of pyridoxal 5'-phosphate (PLP). Catalyzes the phosphorylation of pyridoxal to PLP.</text>
</comment>
<comment type="catalytic activity">
    <reaction evidence="1">
        <text>pyridoxal + ATP = pyridoxal 5'-phosphate + ADP + H(+)</text>
        <dbReference type="Rhea" id="RHEA:10224"/>
        <dbReference type="ChEBI" id="CHEBI:15378"/>
        <dbReference type="ChEBI" id="CHEBI:17310"/>
        <dbReference type="ChEBI" id="CHEBI:30616"/>
        <dbReference type="ChEBI" id="CHEBI:456216"/>
        <dbReference type="ChEBI" id="CHEBI:597326"/>
        <dbReference type="EC" id="2.7.1.35"/>
    </reaction>
</comment>
<comment type="cofactor">
    <cofactor evidence="1">
        <name>Mg(2+)</name>
        <dbReference type="ChEBI" id="CHEBI:18420"/>
    </cofactor>
</comment>
<comment type="pathway">
    <text evidence="1">Cofactor metabolism; pyridoxal 5'-phosphate salvage; pyridoxal 5'-phosphate from pyridoxal: step 1/1.</text>
</comment>
<comment type="subunit">
    <text evidence="1">Homodimer.</text>
</comment>
<comment type="similarity">
    <text evidence="1">Belongs to the pyridoxine kinase family. PdxY subfamily.</text>
</comment>
<keyword id="KW-0002">3D-structure</keyword>
<keyword id="KW-0067">ATP-binding</keyword>
<keyword id="KW-0418">Kinase</keyword>
<keyword id="KW-0460">Magnesium</keyword>
<keyword id="KW-0547">Nucleotide-binding</keyword>
<keyword id="KW-1185">Reference proteome</keyword>
<keyword id="KW-0808">Transferase</keyword>
<name>PDXY_YERPE</name>
<dbReference type="EC" id="2.7.1.35" evidence="1"/>
<dbReference type="EMBL" id="AE009952">
    <property type="protein sequence ID" value="AAM85533.1"/>
    <property type="molecule type" value="Genomic_DNA"/>
</dbReference>
<dbReference type="EMBL" id="AL590842">
    <property type="protein sequence ID" value="CAL20996.1"/>
    <property type="molecule type" value="Genomic_DNA"/>
</dbReference>
<dbReference type="EMBL" id="AE017042">
    <property type="protein sequence ID" value="AAS62362.1"/>
    <property type="molecule type" value="Genomic_DNA"/>
</dbReference>
<dbReference type="PIR" id="AI0288">
    <property type="entry name" value="AI0288"/>
</dbReference>
<dbReference type="RefSeq" id="WP_002210961.1">
    <property type="nucleotide sequence ID" value="NZ_WUCM01000049.1"/>
</dbReference>
<dbReference type="RefSeq" id="YP_002347334.1">
    <property type="nucleotide sequence ID" value="NC_003143.1"/>
</dbReference>
<dbReference type="PDB" id="3PZS">
    <property type="method" value="X-ray"/>
    <property type="resolution" value="1.89 A"/>
    <property type="chains" value="A/B=1-286"/>
</dbReference>
<dbReference type="PDBsum" id="3PZS"/>
<dbReference type="SMR" id="Q7CIR8"/>
<dbReference type="STRING" id="214092.YPO2368"/>
<dbReference type="PaxDb" id="214092-YPO2368"/>
<dbReference type="DNASU" id="1146914"/>
<dbReference type="EnsemblBacteria" id="AAS62362">
    <property type="protein sequence ID" value="AAS62362"/>
    <property type="gene ID" value="YP_2154"/>
</dbReference>
<dbReference type="GeneID" id="57976307"/>
<dbReference type="KEGG" id="ype:YPO2368"/>
<dbReference type="KEGG" id="ypk:y1967"/>
<dbReference type="KEGG" id="ypm:YP_2154"/>
<dbReference type="PATRIC" id="fig|214092.21.peg.2775"/>
<dbReference type="eggNOG" id="COG2240">
    <property type="taxonomic scope" value="Bacteria"/>
</dbReference>
<dbReference type="HOGENOM" id="CLU_046496_3_0_6"/>
<dbReference type="OMA" id="HTQYGQW"/>
<dbReference type="OrthoDB" id="9800808at2"/>
<dbReference type="UniPathway" id="UPA01068">
    <property type="reaction ID" value="UER00298"/>
</dbReference>
<dbReference type="EvolutionaryTrace" id="Q7CIR8"/>
<dbReference type="Proteomes" id="UP000000815">
    <property type="component" value="Chromosome"/>
</dbReference>
<dbReference type="Proteomes" id="UP000001019">
    <property type="component" value="Chromosome"/>
</dbReference>
<dbReference type="Proteomes" id="UP000002490">
    <property type="component" value="Chromosome"/>
</dbReference>
<dbReference type="GO" id="GO:0005829">
    <property type="term" value="C:cytosol"/>
    <property type="evidence" value="ECO:0000318"/>
    <property type="project" value="GO_Central"/>
</dbReference>
<dbReference type="GO" id="GO:0005524">
    <property type="term" value="F:ATP binding"/>
    <property type="evidence" value="ECO:0007669"/>
    <property type="project" value="UniProtKB-UniRule"/>
</dbReference>
<dbReference type="GO" id="GO:0000287">
    <property type="term" value="F:magnesium ion binding"/>
    <property type="evidence" value="ECO:0007669"/>
    <property type="project" value="UniProtKB-UniRule"/>
</dbReference>
<dbReference type="GO" id="GO:0008478">
    <property type="term" value="F:pyridoxal kinase activity"/>
    <property type="evidence" value="ECO:0000318"/>
    <property type="project" value="GO_Central"/>
</dbReference>
<dbReference type="GO" id="GO:0009443">
    <property type="term" value="P:pyridoxal 5'-phosphate salvage"/>
    <property type="evidence" value="ECO:0000318"/>
    <property type="project" value="GO_Central"/>
</dbReference>
<dbReference type="CDD" id="cd01173">
    <property type="entry name" value="pyridoxal_pyridoxamine_kinase"/>
    <property type="match status" value="1"/>
</dbReference>
<dbReference type="FunFam" id="3.40.1190.20:FF:000008">
    <property type="entry name" value="Pyridoxal kinase PdxY"/>
    <property type="match status" value="1"/>
</dbReference>
<dbReference type="Gene3D" id="3.40.1190.20">
    <property type="match status" value="1"/>
</dbReference>
<dbReference type="HAMAP" id="MF_01639">
    <property type="entry name" value="PdxY"/>
    <property type="match status" value="1"/>
</dbReference>
<dbReference type="InterPro" id="IPR013749">
    <property type="entry name" value="PM/HMP-P_kinase-1"/>
</dbReference>
<dbReference type="InterPro" id="IPR004625">
    <property type="entry name" value="PyrdxlKinase"/>
</dbReference>
<dbReference type="InterPro" id="IPR023685">
    <property type="entry name" value="Pyridoxal_kinase_PdxY"/>
</dbReference>
<dbReference type="InterPro" id="IPR029056">
    <property type="entry name" value="Ribokinase-like"/>
</dbReference>
<dbReference type="NCBIfam" id="NF004398">
    <property type="entry name" value="PRK05756.1"/>
    <property type="match status" value="1"/>
</dbReference>
<dbReference type="NCBIfam" id="TIGR00687">
    <property type="entry name" value="pyridox_kin"/>
    <property type="match status" value="1"/>
</dbReference>
<dbReference type="PANTHER" id="PTHR10534">
    <property type="entry name" value="PYRIDOXAL KINASE"/>
    <property type="match status" value="1"/>
</dbReference>
<dbReference type="PANTHER" id="PTHR10534:SF2">
    <property type="entry name" value="PYRIDOXAL KINASE"/>
    <property type="match status" value="1"/>
</dbReference>
<dbReference type="Pfam" id="PF08543">
    <property type="entry name" value="Phos_pyr_kin"/>
    <property type="match status" value="1"/>
</dbReference>
<dbReference type="SUPFAM" id="SSF53613">
    <property type="entry name" value="Ribokinase-like"/>
    <property type="match status" value="1"/>
</dbReference>